<protein>
    <recommendedName>
        <fullName>Uncharacterized protein HI_1225</fullName>
    </recommendedName>
</protein>
<name>Y1225_HAEIN</name>
<keyword id="KW-0648">Protein biosynthesis</keyword>
<keyword id="KW-1185">Reference proteome</keyword>
<keyword id="KW-0810">Translation regulation</keyword>
<gene>
    <name type="ordered locus">HI_1225</name>
</gene>
<evidence type="ECO:0000305" key="1"/>
<accession>P45116</accession>
<reference key="1">
    <citation type="journal article" date="1995" name="Science">
        <title>Whole-genome random sequencing and assembly of Haemophilus influenzae Rd.</title>
        <authorList>
            <person name="Fleischmann R.D."/>
            <person name="Adams M.D."/>
            <person name="White O."/>
            <person name="Clayton R.A."/>
            <person name="Kirkness E.F."/>
            <person name="Kerlavage A.R."/>
            <person name="Bult C.J."/>
            <person name="Tomb J.-F."/>
            <person name="Dougherty B.A."/>
            <person name="Merrick J.M."/>
            <person name="McKenney K."/>
            <person name="Sutton G.G."/>
            <person name="FitzHugh W."/>
            <person name="Fields C.A."/>
            <person name="Gocayne J.D."/>
            <person name="Scott J.D."/>
            <person name="Shirley R."/>
            <person name="Liu L.-I."/>
            <person name="Glodek A."/>
            <person name="Kelley J.M."/>
            <person name="Weidman J.F."/>
            <person name="Phillips C.A."/>
            <person name="Spriggs T."/>
            <person name="Hedblom E."/>
            <person name="Cotton M.D."/>
            <person name="Utterback T.R."/>
            <person name="Hanna M.C."/>
            <person name="Nguyen D.T."/>
            <person name="Saudek D.M."/>
            <person name="Brandon R.C."/>
            <person name="Fine L.D."/>
            <person name="Fritchman J.L."/>
            <person name="Fuhrmann J.L."/>
            <person name="Geoghagen N.S.M."/>
            <person name="Gnehm C.L."/>
            <person name="McDonald L.A."/>
            <person name="Small K.V."/>
            <person name="Fraser C.M."/>
            <person name="Smith H.O."/>
            <person name="Venter J.C."/>
        </authorList>
    </citation>
    <scope>NUCLEOTIDE SEQUENCE [LARGE SCALE GENOMIC DNA]</scope>
    <source>
        <strain>ATCC 51907 / DSM 11121 / KW20 / Rd</strain>
    </source>
</reference>
<comment type="similarity">
    <text evidence="1">Belongs to the SUI1 family.</text>
</comment>
<feature type="chain" id="PRO_0000130598" description="Uncharacterized protein HI_1225">
    <location>
        <begin position="1"/>
        <end position="106"/>
    </location>
</feature>
<dbReference type="EMBL" id="L42023">
    <property type="protein sequence ID" value="AAC22878.1"/>
    <property type="molecule type" value="Genomic_DNA"/>
</dbReference>
<dbReference type="PIR" id="C64111">
    <property type="entry name" value="C64111"/>
</dbReference>
<dbReference type="RefSeq" id="NP_439381.1">
    <property type="nucleotide sequence ID" value="NC_000907.1"/>
</dbReference>
<dbReference type="SMR" id="P45116"/>
<dbReference type="STRING" id="71421.HI_1225"/>
<dbReference type="EnsemblBacteria" id="AAC22878">
    <property type="protein sequence ID" value="AAC22878"/>
    <property type="gene ID" value="HI_1225"/>
</dbReference>
<dbReference type="KEGG" id="hin:HI_1225"/>
<dbReference type="PATRIC" id="fig|71421.8.peg.1277"/>
<dbReference type="eggNOG" id="COG0023">
    <property type="taxonomic scope" value="Bacteria"/>
</dbReference>
<dbReference type="HOGENOM" id="CLU_082805_4_0_6"/>
<dbReference type="OrthoDB" id="9792915at2"/>
<dbReference type="PhylomeDB" id="P45116"/>
<dbReference type="BioCyc" id="HINF71421:G1GJ1-1256-MONOMER"/>
<dbReference type="Proteomes" id="UP000000579">
    <property type="component" value="Chromosome"/>
</dbReference>
<dbReference type="GO" id="GO:0003743">
    <property type="term" value="F:translation initiation factor activity"/>
    <property type="evidence" value="ECO:0007669"/>
    <property type="project" value="InterPro"/>
</dbReference>
<dbReference type="GO" id="GO:0001731">
    <property type="term" value="P:formation of translation preinitiation complex"/>
    <property type="evidence" value="ECO:0000318"/>
    <property type="project" value="GO_Central"/>
</dbReference>
<dbReference type="GO" id="GO:0006417">
    <property type="term" value="P:regulation of translation"/>
    <property type="evidence" value="ECO:0007669"/>
    <property type="project" value="UniProtKB-KW"/>
</dbReference>
<dbReference type="GO" id="GO:0002188">
    <property type="term" value="P:translation reinitiation"/>
    <property type="evidence" value="ECO:0000318"/>
    <property type="project" value="GO_Central"/>
</dbReference>
<dbReference type="CDD" id="cd11567">
    <property type="entry name" value="YciH_like"/>
    <property type="match status" value="1"/>
</dbReference>
<dbReference type="FunFam" id="3.30.780.10:FF:000002">
    <property type="entry name" value="Stress response translation initiation inhibitor"/>
    <property type="match status" value="1"/>
</dbReference>
<dbReference type="Gene3D" id="3.30.780.10">
    <property type="entry name" value="SUI1-like domain"/>
    <property type="match status" value="1"/>
</dbReference>
<dbReference type="InterPro" id="IPR050318">
    <property type="entry name" value="DENR/SUI1_TIF"/>
</dbReference>
<dbReference type="InterPro" id="IPR001950">
    <property type="entry name" value="SUI1"/>
</dbReference>
<dbReference type="InterPro" id="IPR005872">
    <property type="entry name" value="SUI1_arc_bac"/>
</dbReference>
<dbReference type="InterPro" id="IPR036877">
    <property type="entry name" value="SUI1_dom_sf"/>
</dbReference>
<dbReference type="NCBIfam" id="NF006536">
    <property type="entry name" value="PRK09019.1"/>
    <property type="match status" value="1"/>
</dbReference>
<dbReference type="NCBIfam" id="TIGR01158">
    <property type="entry name" value="SUI1_rel"/>
    <property type="match status" value="1"/>
</dbReference>
<dbReference type="PANTHER" id="PTHR12789:SF0">
    <property type="entry name" value="DENSITY-REGULATED PROTEIN"/>
    <property type="match status" value="1"/>
</dbReference>
<dbReference type="PANTHER" id="PTHR12789">
    <property type="entry name" value="DENSITY-REGULATED PROTEIN HOMOLOG"/>
    <property type="match status" value="1"/>
</dbReference>
<dbReference type="Pfam" id="PF01253">
    <property type="entry name" value="SUI1"/>
    <property type="match status" value="1"/>
</dbReference>
<dbReference type="PIRSF" id="PIRSF037511">
    <property type="entry name" value="Transl_init_SUI1_pro"/>
    <property type="match status" value="1"/>
</dbReference>
<dbReference type="SUPFAM" id="SSF55159">
    <property type="entry name" value="eIF1-like"/>
    <property type="match status" value="1"/>
</dbReference>
<dbReference type="PROSITE" id="PS50296">
    <property type="entry name" value="SUI1"/>
    <property type="match status" value="1"/>
</dbReference>
<organism>
    <name type="scientific">Haemophilus influenzae (strain ATCC 51907 / DSM 11121 / KW20 / Rd)</name>
    <dbReference type="NCBI Taxonomy" id="71421"/>
    <lineage>
        <taxon>Bacteria</taxon>
        <taxon>Pseudomonadati</taxon>
        <taxon>Pseudomonadota</taxon>
        <taxon>Gammaproteobacteria</taxon>
        <taxon>Pasteurellales</taxon>
        <taxon>Pasteurellaceae</taxon>
        <taxon>Haemophilus</taxon>
    </lineage>
</organism>
<proteinExistence type="inferred from homology"/>
<sequence>MSDSVLVYSTDVGRIKEEKASVVRPKGDGVVRIQKQTSGRKGAGVSVITGLDLSDEELKKLAAELKKRCGCGGAVKNGIIEIQGEKRDLLKQLLEQKGFKVKLSGG</sequence>